<dbReference type="EC" id="2.4.2.53" evidence="1"/>
<dbReference type="EMBL" id="CP000247">
    <property type="protein sequence ID" value="ABG70291.1"/>
    <property type="molecule type" value="Genomic_DNA"/>
</dbReference>
<dbReference type="RefSeq" id="WP_000461633.1">
    <property type="nucleotide sequence ID" value="NC_008253.1"/>
</dbReference>
<dbReference type="SMR" id="Q0TFI8"/>
<dbReference type="CAZy" id="GT2">
    <property type="family name" value="Glycosyltransferase Family 2"/>
</dbReference>
<dbReference type="KEGG" id="ecp:ECP_2297"/>
<dbReference type="HOGENOM" id="CLU_033536_0_0_6"/>
<dbReference type="UniPathway" id="UPA00030"/>
<dbReference type="UniPathway" id="UPA00036">
    <property type="reaction ID" value="UER00495"/>
</dbReference>
<dbReference type="Proteomes" id="UP000009182">
    <property type="component" value="Chromosome"/>
</dbReference>
<dbReference type="GO" id="GO:0005886">
    <property type="term" value="C:plasma membrane"/>
    <property type="evidence" value="ECO:0007669"/>
    <property type="project" value="UniProtKB-SubCell"/>
</dbReference>
<dbReference type="GO" id="GO:0016780">
    <property type="term" value="F:phosphotransferase activity, for other substituted phosphate groups"/>
    <property type="evidence" value="ECO:0007669"/>
    <property type="project" value="UniProtKB-UniRule"/>
</dbReference>
<dbReference type="GO" id="GO:0099621">
    <property type="term" value="F:undecaprenyl-phosphate 4-deoxy-4-formamido-L-arabinose transferase activity"/>
    <property type="evidence" value="ECO:0007669"/>
    <property type="project" value="UniProtKB-EC"/>
</dbReference>
<dbReference type="GO" id="GO:0036108">
    <property type="term" value="P:4-amino-4-deoxy-alpha-L-arabinopyranosyl undecaprenyl phosphate biosynthetic process"/>
    <property type="evidence" value="ECO:0007669"/>
    <property type="project" value="UniProtKB-UniRule"/>
</dbReference>
<dbReference type="GO" id="GO:0009245">
    <property type="term" value="P:lipid A biosynthetic process"/>
    <property type="evidence" value="ECO:0007669"/>
    <property type="project" value="UniProtKB-UniRule"/>
</dbReference>
<dbReference type="GO" id="GO:0009103">
    <property type="term" value="P:lipopolysaccharide biosynthetic process"/>
    <property type="evidence" value="ECO:0007669"/>
    <property type="project" value="UniProtKB-UniRule"/>
</dbReference>
<dbReference type="GO" id="GO:0046677">
    <property type="term" value="P:response to antibiotic"/>
    <property type="evidence" value="ECO:0007669"/>
    <property type="project" value="UniProtKB-KW"/>
</dbReference>
<dbReference type="CDD" id="cd04187">
    <property type="entry name" value="DPM1_like_bac"/>
    <property type="match status" value="1"/>
</dbReference>
<dbReference type="FunFam" id="3.90.550.10:FF:000019">
    <property type="entry name" value="Undecaprenyl-phosphate 4-deoxy-4-formamido-L-arabinose transferase"/>
    <property type="match status" value="1"/>
</dbReference>
<dbReference type="Gene3D" id="3.90.550.10">
    <property type="entry name" value="Spore Coat Polysaccharide Biosynthesis Protein SpsA, Chain A"/>
    <property type="match status" value="1"/>
</dbReference>
<dbReference type="HAMAP" id="MF_01164">
    <property type="entry name" value="ArnC_transfer"/>
    <property type="match status" value="1"/>
</dbReference>
<dbReference type="InterPro" id="IPR022857">
    <property type="entry name" value="ArnC_tfrase"/>
</dbReference>
<dbReference type="InterPro" id="IPR001173">
    <property type="entry name" value="Glyco_trans_2-like"/>
</dbReference>
<dbReference type="InterPro" id="IPR050256">
    <property type="entry name" value="Glycosyltransferase_2"/>
</dbReference>
<dbReference type="InterPro" id="IPR029044">
    <property type="entry name" value="Nucleotide-diphossugar_trans"/>
</dbReference>
<dbReference type="NCBIfam" id="NF007986">
    <property type="entry name" value="PRK10714.1"/>
    <property type="match status" value="1"/>
</dbReference>
<dbReference type="PANTHER" id="PTHR48090:SF3">
    <property type="entry name" value="UNDECAPRENYL-PHOSPHATE 4-DEOXY-4-FORMAMIDO-L-ARABINOSE TRANSFERASE"/>
    <property type="match status" value="1"/>
</dbReference>
<dbReference type="PANTHER" id="PTHR48090">
    <property type="entry name" value="UNDECAPRENYL-PHOSPHATE 4-DEOXY-4-FORMAMIDO-L-ARABINOSE TRANSFERASE-RELATED"/>
    <property type="match status" value="1"/>
</dbReference>
<dbReference type="Pfam" id="PF00535">
    <property type="entry name" value="Glycos_transf_2"/>
    <property type="match status" value="1"/>
</dbReference>
<dbReference type="SUPFAM" id="SSF53448">
    <property type="entry name" value="Nucleotide-diphospho-sugar transferases"/>
    <property type="match status" value="1"/>
</dbReference>
<feature type="chain" id="PRO_1000065652" description="Undecaprenyl-phosphate 4-deoxy-4-formamido-L-arabinose transferase">
    <location>
        <begin position="1"/>
        <end position="322"/>
    </location>
</feature>
<feature type="topological domain" description="Cytoplasmic" evidence="1">
    <location>
        <begin position="1"/>
        <end position="235"/>
    </location>
</feature>
<feature type="transmembrane region" description="Helical" evidence="1">
    <location>
        <begin position="236"/>
        <end position="256"/>
    </location>
</feature>
<feature type="topological domain" description="Periplasmic" evidence="1">
    <location>
        <begin position="257"/>
        <end position="269"/>
    </location>
</feature>
<feature type="transmembrane region" description="Helical" evidence="1">
    <location>
        <begin position="270"/>
        <end position="290"/>
    </location>
</feature>
<feature type="topological domain" description="Cytoplasmic" evidence="1">
    <location>
        <begin position="291"/>
        <end position="322"/>
    </location>
</feature>
<name>ARNC_ECOL5</name>
<proteinExistence type="inferred from homology"/>
<organism>
    <name type="scientific">Escherichia coli O6:K15:H31 (strain 536 / UPEC)</name>
    <dbReference type="NCBI Taxonomy" id="362663"/>
    <lineage>
        <taxon>Bacteria</taxon>
        <taxon>Pseudomonadati</taxon>
        <taxon>Pseudomonadota</taxon>
        <taxon>Gammaproteobacteria</taxon>
        <taxon>Enterobacterales</taxon>
        <taxon>Enterobacteriaceae</taxon>
        <taxon>Escherichia</taxon>
    </lineage>
</organism>
<accession>Q0TFI8</accession>
<keyword id="KW-0046">Antibiotic resistance</keyword>
<keyword id="KW-0997">Cell inner membrane</keyword>
<keyword id="KW-1003">Cell membrane</keyword>
<keyword id="KW-0328">Glycosyltransferase</keyword>
<keyword id="KW-0441">Lipid A biosynthesis</keyword>
<keyword id="KW-0444">Lipid biosynthesis</keyword>
<keyword id="KW-0443">Lipid metabolism</keyword>
<keyword id="KW-0448">Lipopolysaccharide biosynthesis</keyword>
<keyword id="KW-0472">Membrane</keyword>
<keyword id="KW-0808">Transferase</keyword>
<keyword id="KW-0812">Transmembrane</keyword>
<keyword id="KW-1133">Transmembrane helix</keyword>
<reference key="1">
    <citation type="journal article" date="2006" name="Mol. Microbiol.">
        <title>Role of pathogenicity island-associated integrases in the genome plasticity of uropathogenic Escherichia coli strain 536.</title>
        <authorList>
            <person name="Hochhut B."/>
            <person name="Wilde C."/>
            <person name="Balling G."/>
            <person name="Middendorf B."/>
            <person name="Dobrindt U."/>
            <person name="Brzuszkiewicz E."/>
            <person name="Gottschalk G."/>
            <person name="Carniel E."/>
            <person name="Hacker J."/>
        </authorList>
    </citation>
    <scope>NUCLEOTIDE SEQUENCE [LARGE SCALE GENOMIC DNA]</scope>
    <source>
        <strain>536 / UPEC</strain>
    </source>
</reference>
<evidence type="ECO:0000255" key="1">
    <source>
        <dbReference type="HAMAP-Rule" id="MF_01164"/>
    </source>
</evidence>
<comment type="function">
    <text evidence="1">Catalyzes the transfer of 4-deoxy-4-formamido-L-arabinose from UDP to undecaprenyl phosphate. The modified arabinose is attached to lipid A and is required for resistance to polymyxin and cationic antimicrobial peptides.</text>
</comment>
<comment type="catalytic activity">
    <reaction evidence="1">
        <text>UDP-4-deoxy-4-formamido-beta-L-arabinose + di-trans,octa-cis-undecaprenyl phosphate = 4-deoxy-4-formamido-alpha-L-arabinopyranosyl di-trans,octa-cis-undecaprenyl phosphate + UDP</text>
        <dbReference type="Rhea" id="RHEA:27722"/>
        <dbReference type="ChEBI" id="CHEBI:58223"/>
        <dbReference type="ChEBI" id="CHEBI:58709"/>
        <dbReference type="ChEBI" id="CHEBI:58909"/>
        <dbReference type="ChEBI" id="CHEBI:60392"/>
        <dbReference type="EC" id="2.4.2.53"/>
    </reaction>
</comment>
<comment type="pathway">
    <text evidence="1">Glycolipid biosynthesis; 4-amino-4-deoxy-alpha-L-arabinose undecaprenyl phosphate biosynthesis; 4-amino-4-deoxy-alpha-L-arabinose undecaprenyl phosphate from UDP-4-deoxy-4-formamido-beta-L-arabinose and undecaprenyl phosphate: step 1/2.</text>
</comment>
<comment type="pathway">
    <text evidence="1">Bacterial outer membrane biogenesis; lipopolysaccharide biosynthesis.</text>
</comment>
<comment type="subcellular location">
    <subcellularLocation>
        <location evidence="1">Cell inner membrane</location>
        <topology evidence="1">Multi-pass membrane protein</topology>
    </subcellularLocation>
</comment>
<comment type="similarity">
    <text evidence="1">Belongs to the glycosyltransferase 2 family.</text>
</comment>
<sequence>MFEIHPVKKVSVVIPVYNEQESLPELIRRTTAACESLGKEYEILLIDDGSSDNSAHMLVEASQAEGSHIVSILLNRNYGQHSAIMAGFSHVTGDLIITLDADLQNPPEEIPRLVAKADEGYDVVGTVRQNRQDSWFRKTASKMINRLIQRTTGKAMGDYGCMLRAYRRHIVDAMLHCHERSTFIPILANIFARRAIEIPVHHAEREFGESKYSFMRLINLMYDLVTCLTTTPLRMLSLLGSIIAIGGFSIAVLLVILRLTFGPQWAAEGVFMLFAVLFTFIGAQFIGMGLLGEYIGRIYTDVRARPRYFVQQVIRPSSKENE</sequence>
<protein>
    <recommendedName>
        <fullName evidence="1">Undecaprenyl-phosphate 4-deoxy-4-formamido-L-arabinose transferase</fullName>
        <ecNumber evidence="1">2.4.2.53</ecNumber>
    </recommendedName>
    <alternativeName>
        <fullName evidence="1">Undecaprenyl-phosphate Ara4FN transferase</fullName>
        <shortName evidence="1">Ara4FN transferase</shortName>
    </alternativeName>
</protein>
<gene>
    <name evidence="1" type="primary">arnC</name>
    <name type="ordered locus">ECP_2297</name>
</gene>